<reference key="1">
    <citation type="submission" date="2008-06" db="EMBL/GenBank/DDBJ databases">
        <title>Complete sequence of Chloroherpeton thalassium ATCC 35110.</title>
        <authorList>
            <consortium name="US DOE Joint Genome Institute"/>
            <person name="Lucas S."/>
            <person name="Copeland A."/>
            <person name="Lapidus A."/>
            <person name="Glavina del Rio T."/>
            <person name="Dalin E."/>
            <person name="Tice H."/>
            <person name="Bruce D."/>
            <person name="Goodwin L."/>
            <person name="Pitluck S."/>
            <person name="Schmutz J."/>
            <person name="Larimer F."/>
            <person name="Land M."/>
            <person name="Hauser L."/>
            <person name="Kyrpides N."/>
            <person name="Mikhailova N."/>
            <person name="Liu Z."/>
            <person name="Li T."/>
            <person name="Zhao F."/>
            <person name="Overmann J."/>
            <person name="Bryant D.A."/>
            <person name="Richardson P."/>
        </authorList>
    </citation>
    <scope>NUCLEOTIDE SEQUENCE [LARGE SCALE GENOMIC DNA]</scope>
    <source>
        <strain>ATCC 35110 / GB-78</strain>
    </source>
</reference>
<name>RL17_CHLT3</name>
<dbReference type="EMBL" id="CP001100">
    <property type="protein sequence ID" value="ACF13579.1"/>
    <property type="molecule type" value="Genomic_DNA"/>
</dbReference>
<dbReference type="RefSeq" id="WP_012499663.1">
    <property type="nucleotide sequence ID" value="NC_011026.1"/>
</dbReference>
<dbReference type="SMR" id="B3QYF1"/>
<dbReference type="STRING" id="517418.Ctha_1115"/>
<dbReference type="KEGG" id="cts:Ctha_1115"/>
<dbReference type="eggNOG" id="COG0203">
    <property type="taxonomic scope" value="Bacteria"/>
</dbReference>
<dbReference type="HOGENOM" id="CLU_074407_0_1_10"/>
<dbReference type="OrthoDB" id="9809073at2"/>
<dbReference type="Proteomes" id="UP000001208">
    <property type="component" value="Chromosome"/>
</dbReference>
<dbReference type="GO" id="GO:0022625">
    <property type="term" value="C:cytosolic large ribosomal subunit"/>
    <property type="evidence" value="ECO:0007669"/>
    <property type="project" value="TreeGrafter"/>
</dbReference>
<dbReference type="GO" id="GO:0003735">
    <property type="term" value="F:structural constituent of ribosome"/>
    <property type="evidence" value="ECO:0007669"/>
    <property type="project" value="InterPro"/>
</dbReference>
<dbReference type="GO" id="GO:0006412">
    <property type="term" value="P:translation"/>
    <property type="evidence" value="ECO:0007669"/>
    <property type="project" value="UniProtKB-UniRule"/>
</dbReference>
<dbReference type="Gene3D" id="3.90.1030.10">
    <property type="entry name" value="Ribosomal protein L17"/>
    <property type="match status" value="1"/>
</dbReference>
<dbReference type="HAMAP" id="MF_01368">
    <property type="entry name" value="Ribosomal_bL17"/>
    <property type="match status" value="1"/>
</dbReference>
<dbReference type="InterPro" id="IPR000456">
    <property type="entry name" value="Ribosomal_bL17"/>
</dbReference>
<dbReference type="InterPro" id="IPR036373">
    <property type="entry name" value="Ribosomal_bL17_sf"/>
</dbReference>
<dbReference type="NCBIfam" id="TIGR00059">
    <property type="entry name" value="L17"/>
    <property type="match status" value="1"/>
</dbReference>
<dbReference type="PANTHER" id="PTHR14413:SF16">
    <property type="entry name" value="LARGE RIBOSOMAL SUBUNIT PROTEIN BL17M"/>
    <property type="match status" value="1"/>
</dbReference>
<dbReference type="PANTHER" id="PTHR14413">
    <property type="entry name" value="RIBOSOMAL PROTEIN L17"/>
    <property type="match status" value="1"/>
</dbReference>
<dbReference type="Pfam" id="PF01196">
    <property type="entry name" value="Ribosomal_L17"/>
    <property type="match status" value="1"/>
</dbReference>
<dbReference type="SUPFAM" id="SSF64263">
    <property type="entry name" value="Prokaryotic ribosomal protein L17"/>
    <property type="match status" value="1"/>
</dbReference>
<protein>
    <recommendedName>
        <fullName evidence="1">Large ribosomal subunit protein bL17</fullName>
    </recommendedName>
    <alternativeName>
        <fullName evidence="3">50S ribosomal protein L17</fullName>
    </alternativeName>
</protein>
<feature type="chain" id="PRO_1000144398" description="Large ribosomal subunit protein bL17">
    <location>
        <begin position="1"/>
        <end position="169"/>
    </location>
</feature>
<feature type="region of interest" description="Disordered" evidence="2">
    <location>
        <begin position="124"/>
        <end position="169"/>
    </location>
</feature>
<feature type="compositionally biased region" description="Basic residues" evidence="2">
    <location>
        <begin position="131"/>
        <end position="140"/>
    </location>
</feature>
<feature type="compositionally biased region" description="Low complexity" evidence="2">
    <location>
        <begin position="150"/>
        <end position="161"/>
    </location>
</feature>
<organism>
    <name type="scientific">Chloroherpeton thalassium (strain ATCC 35110 / GB-78)</name>
    <dbReference type="NCBI Taxonomy" id="517418"/>
    <lineage>
        <taxon>Bacteria</taxon>
        <taxon>Pseudomonadati</taxon>
        <taxon>Chlorobiota</taxon>
        <taxon>Chlorobiia</taxon>
        <taxon>Chlorobiales</taxon>
        <taxon>Chloroherpetonaceae</taxon>
        <taxon>Chloroherpeton</taxon>
    </lineage>
</organism>
<keyword id="KW-1185">Reference proteome</keyword>
<keyword id="KW-0687">Ribonucleoprotein</keyword>
<keyword id="KW-0689">Ribosomal protein</keyword>
<comment type="subunit">
    <text evidence="1">Part of the 50S ribosomal subunit. Contacts protein L32.</text>
</comment>
<comment type="similarity">
    <text evidence="1">Belongs to the bacterial ribosomal protein bL17 family.</text>
</comment>
<gene>
    <name evidence="1" type="primary">rplQ</name>
    <name type="ordered locus">Ctha_1115</name>
</gene>
<evidence type="ECO:0000255" key="1">
    <source>
        <dbReference type="HAMAP-Rule" id="MF_01368"/>
    </source>
</evidence>
<evidence type="ECO:0000256" key="2">
    <source>
        <dbReference type="SAM" id="MobiDB-lite"/>
    </source>
</evidence>
<evidence type="ECO:0000305" key="3"/>
<proteinExistence type="inferred from homology"/>
<sequence length="169" mass="18975">MRKGKLPRKLGRTASHRRATLANLSSQLIIYKRVTTTEAKAKEMKRIVDKLITRAKKGTVHAQREVFKFVRDKEAVKTLFEDVVSKSAERNGGYTRVIKLPPRYGDAAKMALIELVDYSEMTTEKAVKRQDRSRRVKGSKKAIDEKTSDDSASVEAAPAAPEAEEKKDA</sequence>
<accession>B3QYF1</accession>